<evidence type="ECO:0000255" key="1">
    <source>
        <dbReference type="HAMAP-Rule" id="MF_00238"/>
    </source>
</evidence>
<sequence>MKKSLQIALDGPAGAGKSTIAKSLAKQLGYVYIDTGAIYRAVTYRALNEGIALEDGPALAQMIENMSLRLVPSEEGQRVFDGEEEVTSVIRSSEVTNNVSFVARQPEVRDALMDLQRDLAKKGGVVMDGRDIGTHVLPNADLKVFMTASVEERARRRHEENVSKGIPSDYEQLIEEIALRDKRDSEREVAPLRQAEDAHFLDTTTLSIDGVVQAIERLIEEVKA</sequence>
<gene>
    <name evidence="1" type="primary">cmk</name>
    <name type="ordered locus">EAT1b_2985</name>
</gene>
<name>KCY_EXISA</name>
<organism>
    <name type="scientific">Exiguobacterium sp. (strain ATCC BAA-1283 / AT1b)</name>
    <dbReference type="NCBI Taxonomy" id="360911"/>
    <lineage>
        <taxon>Bacteria</taxon>
        <taxon>Bacillati</taxon>
        <taxon>Bacillota</taxon>
        <taxon>Bacilli</taxon>
        <taxon>Bacillales</taxon>
        <taxon>Bacillales Family XII. Incertae Sedis</taxon>
        <taxon>Exiguobacterium</taxon>
    </lineage>
</organism>
<comment type="catalytic activity">
    <reaction evidence="1">
        <text>CMP + ATP = CDP + ADP</text>
        <dbReference type="Rhea" id="RHEA:11600"/>
        <dbReference type="ChEBI" id="CHEBI:30616"/>
        <dbReference type="ChEBI" id="CHEBI:58069"/>
        <dbReference type="ChEBI" id="CHEBI:60377"/>
        <dbReference type="ChEBI" id="CHEBI:456216"/>
        <dbReference type="EC" id="2.7.4.25"/>
    </reaction>
</comment>
<comment type="catalytic activity">
    <reaction evidence="1">
        <text>dCMP + ATP = dCDP + ADP</text>
        <dbReference type="Rhea" id="RHEA:25094"/>
        <dbReference type="ChEBI" id="CHEBI:30616"/>
        <dbReference type="ChEBI" id="CHEBI:57566"/>
        <dbReference type="ChEBI" id="CHEBI:58593"/>
        <dbReference type="ChEBI" id="CHEBI:456216"/>
        <dbReference type="EC" id="2.7.4.25"/>
    </reaction>
</comment>
<comment type="subcellular location">
    <subcellularLocation>
        <location evidence="1">Cytoplasm</location>
    </subcellularLocation>
</comment>
<comment type="similarity">
    <text evidence="1">Belongs to the cytidylate kinase family. Type 1 subfamily.</text>
</comment>
<dbReference type="EC" id="2.7.4.25" evidence="1"/>
<dbReference type="EMBL" id="CP001615">
    <property type="protein sequence ID" value="ACQ71899.1"/>
    <property type="molecule type" value="Genomic_DNA"/>
</dbReference>
<dbReference type="RefSeq" id="WP_015881458.1">
    <property type="nucleotide sequence ID" value="NC_012673.1"/>
</dbReference>
<dbReference type="SMR" id="C4L6M0"/>
<dbReference type="STRING" id="360911.EAT1b_2985"/>
<dbReference type="KEGG" id="eat:EAT1b_2985"/>
<dbReference type="eggNOG" id="COG0283">
    <property type="taxonomic scope" value="Bacteria"/>
</dbReference>
<dbReference type="HOGENOM" id="CLU_079959_0_2_9"/>
<dbReference type="OrthoDB" id="9807434at2"/>
<dbReference type="Proteomes" id="UP000000716">
    <property type="component" value="Chromosome"/>
</dbReference>
<dbReference type="GO" id="GO:0005829">
    <property type="term" value="C:cytosol"/>
    <property type="evidence" value="ECO:0007669"/>
    <property type="project" value="TreeGrafter"/>
</dbReference>
<dbReference type="GO" id="GO:0005524">
    <property type="term" value="F:ATP binding"/>
    <property type="evidence" value="ECO:0007669"/>
    <property type="project" value="UniProtKB-UniRule"/>
</dbReference>
<dbReference type="GO" id="GO:0036430">
    <property type="term" value="F:CMP kinase activity"/>
    <property type="evidence" value="ECO:0007669"/>
    <property type="project" value="RHEA"/>
</dbReference>
<dbReference type="GO" id="GO:0036431">
    <property type="term" value="F:dCMP kinase activity"/>
    <property type="evidence" value="ECO:0007669"/>
    <property type="project" value="RHEA"/>
</dbReference>
<dbReference type="GO" id="GO:0015949">
    <property type="term" value="P:nucleobase-containing small molecule interconversion"/>
    <property type="evidence" value="ECO:0007669"/>
    <property type="project" value="TreeGrafter"/>
</dbReference>
<dbReference type="GO" id="GO:0006220">
    <property type="term" value="P:pyrimidine nucleotide metabolic process"/>
    <property type="evidence" value="ECO:0007669"/>
    <property type="project" value="UniProtKB-UniRule"/>
</dbReference>
<dbReference type="CDD" id="cd02020">
    <property type="entry name" value="CMPK"/>
    <property type="match status" value="1"/>
</dbReference>
<dbReference type="Gene3D" id="3.40.50.300">
    <property type="entry name" value="P-loop containing nucleotide triphosphate hydrolases"/>
    <property type="match status" value="1"/>
</dbReference>
<dbReference type="HAMAP" id="MF_00238">
    <property type="entry name" value="Cytidyl_kinase_type1"/>
    <property type="match status" value="1"/>
</dbReference>
<dbReference type="InterPro" id="IPR003136">
    <property type="entry name" value="Cytidylate_kin"/>
</dbReference>
<dbReference type="InterPro" id="IPR011994">
    <property type="entry name" value="Cytidylate_kinase_dom"/>
</dbReference>
<dbReference type="InterPro" id="IPR027417">
    <property type="entry name" value="P-loop_NTPase"/>
</dbReference>
<dbReference type="NCBIfam" id="TIGR00017">
    <property type="entry name" value="cmk"/>
    <property type="match status" value="1"/>
</dbReference>
<dbReference type="PANTHER" id="PTHR21299:SF2">
    <property type="entry name" value="CYTIDYLATE KINASE"/>
    <property type="match status" value="1"/>
</dbReference>
<dbReference type="PANTHER" id="PTHR21299">
    <property type="entry name" value="CYTIDYLATE KINASE/PANTOATE-BETA-ALANINE LIGASE"/>
    <property type="match status" value="1"/>
</dbReference>
<dbReference type="Pfam" id="PF02224">
    <property type="entry name" value="Cytidylate_kin"/>
    <property type="match status" value="1"/>
</dbReference>
<dbReference type="SUPFAM" id="SSF52540">
    <property type="entry name" value="P-loop containing nucleoside triphosphate hydrolases"/>
    <property type="match status" value="1"/>
</dbReference>
<feature type="chain" id="PRO_1000204450" description="Cytidylate kinase">
    <location>
        <begin position="1"/>
        <end position="224"/>
    </location>
</feature>
<feature type="binding site" evidence="1">
    <location>
        <begin position="11"/>
        <end position="19"/>
    </location>
    <ligand>
        <name>ATP</name>
        <dbReference type="ChEBI" id="CHEBI:30616"/>
    </ligand>
</feature>
<proteinExistence type="inferred from homology"/>
<keyword id="KW-0067">ATP-binding</keyword>
<keyword id="KW-0963">Cytoplasm</keyword>
<keyword id="KW-0418">Kinase</keyword>
<keyword id="KW-0547">Nucleotide-binding</keyword>
<keyword id="KW-0808">Transferase</keyword>
<accession>C4L6M0</accession>
<protein>
    <recommendedName>
        <fullName evidence="1">Cytidylate kinase</fullName>
        <shortName evidence="1">CK</shortName>
        <ecNumber evidence="1">2.7.4.25</ecNumber>
    </recommendedName>
    <alternativeName>
        <fullName evidence="1">Cytidine monophosphate kinase</fullName>
        <shortName evidence="1">CMP kinase</shortName>
    </alternativeName>
</protein>
<reference key="1">
    <citation type="journal article" date="2011" name="J. Bacteriol.">
        <title>Complete genome sequence of the Thermophilic Bacterium Exiguobacterium sp. AT1b.</title>
        <authorList>
            <person name="Vishnivetskaya T.A."/>
            <person name="Lucas S."/>
            <person name="Copeland A."/>
            <person name="Lapidus A."/>
            <person name="Glavina del Rio T."/>
            <person name="Dalin E."/>
            <person name="Tice H."/>
            <person name="Bruce D.C."/>
            <person name="Goodwin L.A."/>
            <person name="Pitluck S."/>
            <person name="Saunders E."/>
            <person name="Brettin T."/>
            <person name="Detter C."/>
            <person name="Han C."/>
            <person name="Larimer F."/>
            <person name="Land M.L."/>
            <person name="Hauser L.J."/>
            <person name="Kyrpides N.C."/>
            <person name="Ovchinnikova G."/>
            <person name="Kathariou S."/>
            <person name="Ramaley R.F."/>
            <person name="Rodrigues D.F."/>
            <person name="Hendrix C."/>
            <person name="Richardson P."/>
            <person name="Tiedje J.M."/>
        </authorList>
    </citation>
    <scope>NUCLEOTIDE SEQUENCE [LARGE SCALE GENOMIC DNA]</scope>
    <source>
        <strain>ATCC BAA-1283 / AT1b</strain>
    </source>
</reference>